<accession>A0LLH1</accession>
<proteinExistence type="inferred from homology"/>
<keyword id="KW-0255">Endonuclease</keyword>
<keyword id="KW-0378">Hydrolase</keyword>
<keyword id="KW-0540">Nuclease</keyword>
<keyword id="KW-1185">Reference proteome</keyword>
<keyword id="KW-0694">RNA-binding</keyword>
<keyword id="KW-0819">tRNA processing</keyword>
<reference key="1">
    <citation type="submission" date="2006-10" db="EMBL/GenBank/DDBJ databases">
        <title>Complete sequence of Syntrophobacter fumaroxidans MPOB.</title>
        <authorList>
            <consortium name="US DOE Joint Genome Institute"/>
            <person name="Copeland A."/>
            <person name="Lucas S."/>
            <person name="Lapidus A."/>
            <person name="Barry K."/>
            <person name="Detter J.C."/>
            <person name="Glavina del Rio T."/>
            <person name="Hammon N."/>
            <person name="Israni S."/>
            <person name="Pitluck S."/>
            <person name="Goltsman E.G."/>
            <person name="Martinez M."/>
            <person name="Schmutz J."/>
            <person name="Larimer F."/>
            <person name="Land M."/>
            <person name="Hauser L."/>
            <person name="Kyrpides N."/>
            <person name="Kim E."/>
            <person name="Boone D.R."/>
            <person name="Brockman F."/>
            <person name="Culley D."/>
            <person name="Ferry J."/>
            <person name="Gunsalus R."/>
            <person name="McInerney M.J."/>
            <person name="Morrison M."/>
            <person name="Plugge C."/>
            <person name="Rohlin L."/>
            <person name="Scholten J."/>
            <person name="Sieber J."/>
            <person name="Stams A.J.M."/>
            <person name="Worm P."/>
            <person name="Henstra A.M."/>
            <person name="Richardson P."/>
        </authorList>
    </citation>
    <scope>NUCLEOTIDE SEQUENCE [LARGE SCALE GENOMIC DNA]</scope>
    <source>
        <strain>DSM 10017 / MPOB</strain>
    </source>
</reference>
<gene>
    <name evidence="1" type="primary">rnpA</name>
    <name type="ordered locus">Sfum_2595</name>
</gene>
<feature type="chain" id="PRO_1000100401" description="Ribonuclease P protein component">
    <location>
        <begin position="1"/>
        <end position="119"/>
    </location>
</feature>
<feature type="region of interest" description="Disordered" evidence="2">
    <location>
        <begin position="1"/>
        <end position="24"/>
    </location>
</feature>
<feature type="compositionally biased region" description="Basic and acidic residues" evidence="2">
    <location>
        <begin position="8"/>
        <end position="21"/>
    </location>
</feature>
<sequence>MRGSSRFRPHEKLRASDDYQRVKRSGRRVRTAHFGVNFAANDLPHHRLGLVVQKRYWNAVGRNRIKRRIREWFRLNKTRIPAPYRDIVVVARPGAEKLSSLDVTKELLAIFLHKDGRIR</sequence>
<evidence type="ECO:0000255" key="1">
    <source>
        <dbReference type="HAMAP-Rule" id="MF_00227"/>
    </source>
</evidence>
<evidence type="ECO:0000256" key="2">
    <source>
        <dbReference type="SAM" id="MobiDB-lite"/>
    </source>
</evidence>
<protein>
    <recommendedName>
        <fullName evidence="1">Ribonuclease P protein component</fullName>
        <shortName evidence="1">RNase P protein</shortName>
        <shortName evidence="1">RNaseP protein</shortName>
        <ecNumber evidence="1">3.1.26.5</ecNumber>
    </recommendedName>
    <alternativeName>
        <fullName evidence="1">Protein C5</fullName>
    </alternativeName>
</protein>
<organism>
    <name type="scientific">Syntrophobacter fumaroxidans (strain DSM 10017 / MPOB)</name>
    <dbReference type="NCBI Taxonomy" id="335543"/>
    <lineage>
        <taxon>Bacteria</taxon>
        <taxon>Pseudomonadati</taxon>
        <taxon>Thermodesulfobacteriota</taxon>
        <taxon>Syntrophobacteria</taxon>
        <taxon>Syntrophobacterales</taxon>
        <taxon>Syntrophobacteraceae</taxon>
        <taxon>Syntrophobacter</taxon>
    </lineage>
</organism>
<dbReference type="EC" id="3.1.26.5" evidence="1"/>
<dbReference type="EMBL" id="CP000478">
    <property type="protein sequence ID" value="ABK18273.1"/>
    <property type="molecule type" value="Genomic_DNA"/>
</dbReference>
<dbReference type="RefSeq" id="WP_011699441.1">
    <property type="nucleotide sequence ID" value="NC_008554.1"/>
</dbReference>
<dbReference type="SMR" id="A0LLH1"/>
<dbReference type="STRING" id="335543.Sfum_2595"/>
<dbReference type="KEGG" id="sfu:Sfum_2595"/>
<dbReference type="eggNOG" id="COG0594">
    <property type="taxonomic scope" value="Bacteria"/>
</dbReference>
<dbReference type="HOGENOM" id="CLU_117179_11_0_7"/>
<dbReference type="InParanoid" id="A0LLH1"/>
<dbReference type="Proteomes" id="UP000001784">
    <property type="component" value="Chromosome"/>
</dbReference>
<dbReference type="GO" id="GO:0030677">
    <property type="term" value="C:ribonuclease P complex"/>
    <property type="evidence" value="ECO:0007669"/>
    <property type="project" value="TreeGrafter"/>
</dbReference>
<dbReference type="GO" id="GO:0042781">
    <property type="term" value="F:3'-tRNA processing endoribonuclease activity"/>
    <property type="evidence" value="ECO:0007669"/>
    <property type="project" value="TreeGrafter"/>
</dbReference>
<dbReference type="GO" id="GO:0004526">
    <property type="term" value="F:ribonuclease P activity"/>
    <property type="evidence" value="ECO:0007669"/>
    <property type="project" value="UniProtKB-UniRule"/>
</dbReference>
<dbReference type="GO" id="GO:0000049">
    <property type="term" value="F:tRNA binding"/>
    <property type="evidence" value="ECO:0007669"/>
    <property type="project" value="UniProtKB-UniRule"/>
</dbReference>
<dbReference type="GO" id="GO:0001682">
    <property type="term" value="P:tRNA 5'-leader removal"/>
    <property type="evidence" value="ECO:0007669"/>
    <property type="project" value="UniProtKB-UniRule"/>
</dbReference>
<dbReference type="Gene3D" id="3.30.230.10">
    <property type="match status" value="1"/>
</dbReference>
<dbReference type="HAMAP" id="MF_00227">
    <property type="entry name" value="RNase_P"/>
    <property type="match status" value="1"/>
</dbReference>
<dbReference type="InterPro" id="IPR020568">
    <property type="entry name" value="Ribosomal_Su5_D2-typ_SF"/>
</dbReference>
<dbReference type="InterPro" id="IPR014721">
    <property type="entry name" value="Ribsml_uS5_D2-typ_fold_subgr"/>
</dbReference>
<dbReference type="InterPro" id="IPR000100">
    <property type="entry name" value="RNase_P"/>
</dbReference>
<dbReference type="InterPro" id="IPR020539">
    <property type="entry name" value="RNase_P_CS"/>
</dbReference>
<dbReference type="NCBIfam" id="TIGR00188">
    <property type="entry name" value="rnpA"/>
    <property type="match status" value="1"/>
</dbReference>
<dbReference type="PANTHER" id="PTHR33992">
    <property type="entry name" value="RIBONUCLEASE P PROTEIN COMPONENT"/>
    <property type="match status" value="1"/>
</dbReference>
<dbReference type="PANTHER" id="PTHR33992:SF1">
    <property type="entry name" value="RIBONUCLEASE P PROTEIN COMPONENT"/>
    <property type="match status" value="1"/>
</dbReference>
<dbReference type="Pfam" id="PF00825">
    <property type="entry name" value="Ribonuclease_P"/>
    <property type="match status" value="1"/>
</dbReference>
<dbReference type="SUPFAM" id="SSF54211">
    <property type="entry name" value="Ribosomal protein S5 domain 2-like"/>
    <property type="match status" value="1"/>
</dbReference>
<dbReference type="PROSITE" id="PS00648">
    <property type="entry name" value="RIBONUCLEASE_P"/>
    <property type="match status" value="1"/>
</dbReference>
<name>RNPA_SYNFM</name>
<comment type="function">
    <text evidence="1">RNaseP catalyzes the removal of the 5'-leader sequence from pre-tRNA to produce the mature 5'-terminus. It can also cleave other RNA substrates such as 4.5S RNA. The protein component plays an auxiliary but essential role in vivo by binding to the 5'-leader sequence and broadening the substrate specificity of the ribozyme.</text>
</comment>
<comment type="catalytic activity">
    <reaction evidence="1">
        <text>Endonucleolytic cleavage of RNA, removing 5'-extranucleotides from tRNA precursor.</text>
        <dbReference type="EC" id="3.1.26.5"/>
    </reaction>
</comment>
<comment type="subunit">
    <text evidence="1">Consists of a catalytic RNA component (M1 or rnpB) and a protein subunit.</text>
</comment>
<comment type="similarity">
    <text evidence="1">Belongs to the RnpA family.</text>
</comment>